<name>SRP54_SYNY3</name>
<keyword id="KW-0963">Cytoplasm</keyword>
<keyword id="KW-0342">GTP-binding</keyword>
<keyword id="KW-0378">Hydrolase</keyword>
<keyword id="KW-0547">Nucleotide-binding</keyword>
<keyword id="KW-1185">Reference proteome</keyword>
<keyword id="KW-0687">Ribonucleoprotein</keyword>
<keyword id="KW-0694">RNA-binding</keyword>
<keyword id="KW-0733">Signal recognition particle</keyword>
<evidence type="ECO:0000255" key="1">
    <source>
        <dbReference type="HAMAP-Rule" id="MF_00306"/>
    </source>
</evidence>
<evidence type="ECO:0000256" key="2">
    <source>
        <dbReference type="SAM" id="MobiDB-lite"/>
    </source>
</evidence>
<gene>
    <name evidence="1" type="primary">ffh</name>
    <name type="ordered locus">slr1531</name>
</gene>
<sequence>MFDALADRLEDAWKKLRGQDKISESNIKEALQEVRRALLAADVNLQVVKGFIKDVEQKALGADVISGVNPGQQFIKIVYDELVNLMGESNVPLAQAEQAPTVILMAGLQGTGKTTATAKLALYLRKQKRSALMVATDVYRPAAIDQLKTLGQQIDVPVFDLGSDANPVEIARQGVEKAKELGVDTVLIDTAGRLQIDPQMMAELAEIKQVVKPDDTLLVVDAMTGQEAANLTHTFHEQIGITGAILTKLDGDTRGGAALSVRQISGQPIKFVGVGEKVEALQPFYPDRLASRILNMGDVLTLVEKAQEAIDVGDVEKLQNKILEATFDFDDFIKQMRFMKNMGSLGGLLKMIPGMNKLSSGDIEKGEKELKRTEAMISSMTTEERKNPDLLAKSPSRRRRIAQGSGHSETDVSKLITNFTKMRTMMQQMGMGGMPGGMPGMGAMPGMGGGMFGGQPGPGFRGYRGGGGKPKKKKKKKGFGQL</sequence>
<reference key="1">
    <citation type="journal article" date="1996" name="DNA Res.">
        <title>Sequence analysis of the genome of the unicellular cyanobacterium Synechocystis sp. strain PCC6803. II. Sequence determination of the entire genome and assignment of potential protein-coding regions.</title>
        <authorList>
            <person name="Kaneko T."/>
            <person name="Sato S."/>
            <person name="Kotani H."/>
            <person name="Tanaka A."/>
            <person name="Asamizu E."/>
            <person name="Nakamura Y."/>
            <person name="Miyajima N."/>
            <person name="Hirosawa M."/>
            <person name="Sugiura M."/>
            <person name="Sasamoto S."/>
            <person name="Kimura T."/>
            <person name="Hosouchi T."/>
            <person name="Matsuno A."/>
            <person name="Muraki A."/>
            <person name="Nakazaki N."/>
            <person name="Naruo K."/>
            <person name="Okumura S."/>
            <person name="Shimpo S."/>
            <person name="Takeuchi C."/>
            <person name="Wada T."/>
            <person name="Watanabe A."/>
            <person name="Yamada M."/>
            <person name="Yasuda M."/>
            <person name="Tabata S."/>
        </authorList>
    </citation>
    <scope>NUCLEOTIDE SEQUENCE [LARGE SCALE GENOMIC DNA]</scope>
    <source>
        <strain>ATCC 27184 / PCC 6803 / Kazusa</strain>
    </source>
</reference>
<protein>
    <recommendedName>
        <fullName evidence="1">Signal recognition particle protein</fullName>
        <ecNumber evidence="1">3.6.5.4</ecNumber>
    </recommendedName>
    <alternativeName>
        <fullName evidence="1">Fifty-four homolog</fullName>
    </alternativeName>
</protein>
<proteinExistence type="inferred from homology"/>
<dbReference type="EC" id="3.6.5.4" evidence="1"/>
<dbReference type="EMBL" id="BA000022">
    <property type="protein sequence ID" value="BAA18306.1"/>
    <property type="molecule type" value="Genomic_DNA"/>
</dbReference>
<dbReference type="PIR" id="S75847">
    <property type="entry name" value="S75847"/>
</dbReference>
<dbReference type="SMR" id="P74214"/>
<dbReference type="FunCoup" id="P74214">
    <property type="interactions" value="510"/>
</dbReference>
<dbReference type="IntAct" id="P74214">
    <property type="interactions" value="2"/>
</dbReference>
<dbReference type="STRING" id="1148.gene:10499182"/>
<dbReference type="PaxDb" id="1148-1653392"/>
<dbReference type="EnsemblBacteria" id="BAA18306">
    <property type="protein sequence ID" value="BAA18306"/>
    <property type="gene ID" value="BAA18306"/>
</dbReference>
<dbReference type="KEGG" id="syn:slr1531"/>
<dbReference type="eggNOG" id="COG0541">
    <property type="taxonomic scope" value="Bacteria"/>
</dbReference>
<dbReference type="InParanoid" id="P74214"/>
<dbReference type="PhylomeDB" id="P74214"/>
<dbReference type="Proteomes" id="UP000001425">
    <property type="component" value="Chromosome"/>
</dbReference>
<dbReference type="GO" id="GO:0048500">
    <property type="term" value="C:signal recognition particle"/>
    <property type="evidence" value="ECO:0007669"/>
    <property type="project" value="UniProtKB-UniRule"/>
</dbReference>
<dbReference type="GO" id="GO:0008312">
    <property type="term" value="F:7S RNA binding"/>
    <property type="evidence" value="ECO:0007669"/>
    <property type="project" value="InterPro"/>
</dbReference>
<dbReference type="GO" id="GO:0016887">
    <property type="term" value="F:ATP hydrolysis activity"/>
    <property type="evidence" value="ECO:0007669"/>
    <property type="project" value="InterPro"/>
</dbReference>
<dbReference type="GO" id="GO:0005525">
    <property type="term" value="F:GTP binding"/>
    <property type="evidence" value="ECO:0007669"/>
    <property type="project" value="UniProtKB-UniRule"/>
</dbReference>
<dbReference type="GO" id="GO:0003924">
    <property type="term" value="F:GTPase activity"/>
    <property type="evidence" value="ECO:0007669"/>
    <property type="project" value="UniProtKB-UniRule"/>
</dbReference>
<dbReference type="GO" id="GO:0006614">
    <property type="term" value="P:SRP-dependent cotranslational protein targeting to membrane"/>
    <property type="evidence" value="ECO:0007669"/>
    <property type="project" value="InterPro"/>
</dbReference>
<dbReference type="CDD" id="cd18539">
    <property type="entry name" value="SRP_G"/>
    <property type="match status" value="1"/>
</dbReference>
<dbReference type="FunFam" id="3.40.50.300:FF:000022">
    <property type="entry name" value="Signal recognition particle 54 kDa subunit"/>
    <property type="match status" value="1"/>
</dbReference>
<dbReference type="Gene3D" id="3.40.50.300">
    <property type="entry name" value="P-loop containing nucleotide triphosphate hydrolases"/>
    <property type="match status" value="1"/>
</dbReference>
<dbReference type="Gene3D" id="1.20.120.140">
    <property type="entry name" value="Signal recognition particle SRP54, nucleotide-binding domain"/>
    <property type="match status" value="1"/>
</dbReference>
<dbReference type="Gene3D" id="1.10.260.30">
    <property type="entry name" value="Signal recognition particle, SRP54 subunit, M-domain"/>
    <property type="match status" value="1"/>
</dbReference>
<dbReference type="HAMAP" id="MF_00306">
    <property type="entry name" value="SRP54"/>
    <property type="match status" value="1"/>
</dbReference>
<dbReference type="InterPro" id="IPR003593">
    <property type="entry name" value="AAA+_ATPase"/>
</dbReference>
<dbReference type="InterPro" id="IPR027417">
    <property type="entry name" value="P-loop_NTPase"/>
</dbReference>
<dbReference type="InterPro" id="IPR036891">
    <property type="entry name" value="Signal_recog_part_SRP54_M_sf"/>
</dbReference>
<dbReference type="InterPro" id="IPR013822">
    <property type="entry name" value="Signal_recog_particl_SRP54_hlx"/>
</dbReference>
<dbReference type="InterPro" id="IPR004125">
    <property type="entry name" value="Signal_recog_particle_SRP54_M"/>
</dbReference>
<dbReference type="InterPro" id="IPR004780">
    <property type="entry name" value="SRP"/>
</dbReference>
<dbReference type="InterPro" id="IPR022941">
    <property type="entry name" value="SRP54"/>
</dbReference>
<dbReference type="InterPro" id="IPR000897">
    <property type="entry name" value="SRP54_GTPase_dom"/>
</dbReference>
<dbReference type="InterPro" id="IPR042101">
    <property type="entry name" value="SRP54_N_sf"/>
</dbReference>
<dbReference type="NCBIfam" id="TIGR00959">
    <property type="entry name" value="ffh"/>
    <property type="match status" value="1"/>
</dbReference>
<dbReference type="PANTHER" id="PTHR11564">
    <property type="entry name" value="SIGNAL RECOGNITION PARTICLE 54K PROTEIN SRP54"/>
    <property type="match status" value="1"/>
</dbReference>
<dbReference type="PANTHER" id="PTHR11564:SF5">
    <property type="entry name" value="SIGNAL RECOGNITION PARTICLE SUBUNIT SRP54"/>
    <property type="match status" value="1"/>
</dbReference>
<dbReference type="Pfam" id="PF00448">
    <property type="entry name" value="SRP54"/>
    <property type="match status" value="1"/>
</dbReference>
<dbReference type="Pfam" id="PF02881">
    <property type="entry name" value="SRP54_N"/>
    <property type="match status" value="1"/>
</dbReference>
<dbReference type="Pfam" id="PF02978">
    <property type="entry name" value="SRP_SPB"/>
    <property type="match status" value="1"/>
</dbReference>
<dbReference type="SMART" id="SM00382">
    <property type="entry name" value="AAA"/>
    <property type="match status" value="1"/>
</dbReference>
<dbReference type="SMART" id="SM00962">
    <property type="entry name" value="SRP54"/>
    <property type="match status" value="1"/>
</dbReference>
<dbReference type="SMART" id="SM00963">
    <property type="entry name" value="SRP54_N"/>
    <property type="match status" value="1"/>
</dbReference>
<dbReference type="SUPFAM" id="SSF52540">
    <property type="entry name" value="P-loop containing nucleoside triphosphate hydrolases"/>
    <property type="match status" value="1"/>
</dbReference>
<dbReference type="SUPFAM" id="SSF47446">
    <property type="entry name" value="Signal peptide-binding domain"/>
    <property type="match status" value="1"/>
</dbReference>
<dbReference type="PROSITE" id="PS00300">
    <property type="entry name" value="SRP54"/>
    <property type="match status" value="1"/>
</dbReference>
<organism>
    <name type="scientific">Synechocystis sp. (strain ATCC 27184 / PCC 6803 / Kazusa)</name>
    <dbReference type="NCBI Taxonomy" id="1111708"/>
    <lineage>
        <taxon>Bacteria</taxon>
        <taxon>Bacillati</taxon>
        <taxon>Cyanobacteriota</taxon>
        <taxon>Cyanophyceae</taxon>
        <taxon>Synechococcales</taxon>
        <taxon>Merismopediaceae</taxon>
        <taxon>Synechocystis</taxon>
    </lineage>
</organism>
<accession>P74214</accession>
<feature type="chain" id="PRO_0000101169" description="Signal recognition particle protein">
    <location>
        <begin position="1"/>
        <end position="482"/>
    </location>
</feature>
<feature type="region of interest" description="Disordered" evidence="2">
    <location>
        <begin position="380"/>
        <end position="413"/>
    </location>
</feature>
<feature type="region of interest" description="Disordered" evidence="2">
    <location>
        <begin position="452"/>
        <end position="482"/>
    </location>
</feature>
<feature type="compositionally biased region" description="Gly residues" evidence="2">
    <location>
        <begin position="452"/>
        <end position="468"/>
    </location>
</feature>
<feature type="compositionally biased region" description="Basic residues" evidence="2">
    <location>
        <begin position="469"/>
        <end position="482"/>
    </location>
</feature>
<feature type="binding site" evidence="1">
    <location>
        <begin position="107"/>
        <end position="114"/>
    </location>
    <ligand>
        <name>GTP</name>
        <dbReference type="ChEBI" id="CHEBI:37565"/>
    </ligand>
</feature>
<feature type="binding site" evidence="1">
    <location>
        <begin position="189"/>
        <end position="193"/>
    </location>
    <ligand>
        <name>GTP</name>
        <dbReference type="ChEBI" id="CHEBI:37565"/>
    </ligand>
</feature>
<feature type="binding site" evidence="1">
    <location>
        <begin position="247"/>
        <end position="250"/>
    </location>
    <ligand>
        <name>GTP</name>
        <dbReference type="ChEBI" id="CHEBI:37565"/>
    </ligand>
</feature>
<comment type="function">
    <text evidence="1">Involved in targeting and insertion of nascent membrane proteins into the cytoplasmic membrane. Binds to the hydrophobic signal sequence of the ribosome-nascent chain (RNC) as it emerges from the ribosomes. The SRP-RNC complex is then targeted to the cytoplasmic membrane where it interacts with the SRP receptor FtsY.</text>
</comment>
<comment type="catalytic activity">
    <reaction evidence="1">
        <text>GTP + H2O = GDP + phosphate + H(+)</text>
        <dbReference type="Rhea" id="RHEA:19669"/>
        <dbReference type="ChEBI" id="CHEBI:15377"/>
        <dbReference type="ChEBI" id="CHEBI:15378"/>
        <dbReference type="ChEBI" id="CHEBI:37565"/>
        <dbReference type="ChEBI" id="CHEBI:43474"/>
        <dbReference type="ChEBI" id="CHEBI:58189"/>
        <dbReference type="EC" id="3.6.5.4"/>
    </reaction>
</comment>
<comment type="subunit">
    <text evidence="1">Part of the signal recognition particle protein translocation system, which is composed of SRP and FtsY.</text>
</comment>
<comment type="subcellular location">
    <subcellularLocation>
        <location evidence="1">Cytoplasm</location>
    </subcellularLocation>
    <text evidence="1">The SRP-RNC complex is targeted to the cytoplasmic membrane.</text>
</comment>
<comment type="domain">
    <text evidence="1">Composed of three domains: the N-terminal N domain, which is responsible for interactions with the ribosome, the central G domain, which binds GTP, and the C-terminal M domain, which binds the RNA and the signal sequence of the RNC.</text>
</comment>
<comment type="similarity">
    <text evidence="1">Belongs to the GTP-binding SRP family. SRP54 subfamily.</text>
</comment>